<sequence>MQHKLLINGERVSGEGEKQPVYNPATGDVLLEIAEVSAEQVDAAVRAADAAFAEWGQTTPKARAECLLKLADVIEENGQVFAELESRNCGKPLHSAFNDEIPAIVDVFRFFAGAARCLNGLAAGEYLEGHTSMIRRDPLGVVASIAPWNYPLMMAAWKLAPALAAGNCVVLKPSEITPLTALKLAELAKDIFPAGVINILFGRGKTVGDPLTGHPKVRMVSLTGSIATGEHIISHTASSIKRTHMELGGKAPVIVFDDADIEAVVEGVRTFGYYNAGQDCTAACRIYAQKGIYDTLVEKLGAAVATLKSGAPDDESTELGPLSSLAHLERVSKAVEEAKATGHIKVITGGEKRKGNGYYYAPTLLAGALQDDAIVQKEVFGPVVSVTPFDNEEQVVNWANDSQYGLASSVWTKDVGRAHRVSARLQYGCTWVNTHFMLVSEMPHGGQKLSGYGKDMSLYGLEDYTVVRHVMVKH</sequence>
<gene>
    <name evidence="1" type="primary">patD</name>
    <name type="ordered locus">SF1774</name>
    <name type="ordered locus">S1905</name>
</gene>
<organism>
    <name type="scientific">Shigella flexneri</name>
    <dbReference type="NCBI Taxonomy" id="623"/>
    <lineage>
        <taxon>Bacteria</taxon>
        <taxon>Pseudomonadati</taxon>
        <taxon>Pseudomonadota</taxon>
        <taxon>Gammaproteobacteria</taxon>
        <taxon>Enterobacterales</taxon>
        <taxon>Enterobacteriaceae</taxon>
        <taxon>Shigella</taxon>
    </lineage>
</organism>
<dbReference type="EC" id="1.2.1.19" evidence="1"/>
<dbReference type="EC" id="1.2.1.-" evidence="1"/>
<dbReference type="EMBL" id="AE005674">
    <property type="protein sequence ID" value="AAN43345.1"/>
    <property type="molecule type" value="Genomic_DNA"/>
</dbReference>
<dbReference type="EMBL" id="AE014073">
    <property type="protein sequence ID" value="AAP17225.1"/>
    <property type="molecule type" value="Genomic_DNA"/>
</dbReference>
<dbReference type="RefSeq" id="NP_707638.1">
    <property type="nucleotide sequence ID" value="NC_004337.2"/>
</dbReference>
<dbReference type="RefSeq" id="WP_001163923.1">
    <property type="nucleotide sequence ID" value="NZ_WPGW01000272.1"/>
</dbReference>
<dbReference type="SMR" id="Q83R90"/>
<dbReference type="STRING" id="198214.SF1774"/>
<dbReference type="PaxDb" id="198214-SF1774"/>
<dbReference type="GeneID" id="1024951"/>
<dbReference type="KEGG" id="sfl:SF1774"/>
<dbReference type="KEGG" id="sfx:S1905"/>
<dbReference type="PATRIC" id="fig|198214.7.peg.2101"/>
<dbReference type="HOGENOM" id="CLU_005391_0_0_6"/>
<dbReference type="UniPathway" id="UPA00188">
    <property type="reaction ID" value="UER00292"/>
</dbReference>
<dbReference type="Proteomes" id="UP000001006">
    <property type="component" value="Chromosome"/>
</dbReference>
<dbReference type="Proteomes" id="UP000002673">
    <property type="component" value="Chromosome"/>
</dbReference>
<dbReference type="GO" id="GO:0019145">
    <property type="term" value="F:aminobutyraldehyde dehydrogenase (NAD+) activity"/>
    <property type="evidence" value="ECO:0007669"/>
    <property type="project" value="UniProtKB-UniRule"/>
</dbReference>
<dbReference type="GO" id="GO:0051287">
    <property type="term" value="F:NAD binding"/>
    <property type="evidence" value="ECO:0007669"/>
    <property type="project" value="UniProtKB-UniRule"/>
</dbReference>
<dbReference type="GO" id="GO:0019477">
    <property type="term" value="P:L-lysine catabolic process"/>
    <property type="evidence" value="ECO:0007669"/>
    <property type="project" value="UniProtKB-UniRule"/>
</dbReference>
<dbReference type="GO" id="GO:0009447">
    <property type="term" value="P:putrescine catabolic process"/>
    <property type="evidence" value="ECO:0007669"/>
    <property type="project" value="UniProtKB-UniRule"/>
</dbReference>
<dbReference type="CDD" id="cd07092">
    <property type="entry name" value="ALDH_ABALDH-YdcW"/>
    <property type="match status" value="1"/>
</dbReference>
<dbReference type="FunFam" id="3.40.605.10:FF:000001">
    <property type="entry name" value="Aldehyde dehydrogenase 1"/>
    <property type="match status" value="1"/>
</dbReference>
<dbReference type="FunFam" id="3.40.309.10:FF:000010">
    <property type="entry name" value="Gamma-aminobutyraldehyde dehydrogenase"/>
    <property type="match status" value="1"/>
</dbReference>
<dbReference type="Gene3D" id="3.40.605.10">
    <property type="entry name" value="Aldehyde Dehydrogenase, Chain A, domain 1"/>
    <property type="match status" value="1"/>
</dbReference>
<dbReference type="Gene3D" id="3.40.309.10">
    <property type="entry name" value="Aldehyde Dehydrogenase, Chain A, domain 2"/>
    <property type="match status" value="1"/>
</dbReference>
<dbReference type="HAMAP" id="MF_01275">
    <property type="entry name" value="Aldedh_Prr"/>
    <property type="match status" value="1"/>
</dbReference>
<dbReference type="InterPro" id="IPR016161">
    <property type="entry name" value="Ald_DH/histidinol_DH"/>
</dbReference>
<dbReference type="InterPro" id="IPR016163">
    <property type="entry name" value="Ald_DH_C"/>
</dbReference>
<dbReference type="InterPro" id="IPR029510">
    <property type="entry name" value="Ald_DH_CS_GLU"/>
</dbReference>
<dbReference type="InterPro" id="IPR016162">
    <property type="entry name" value="Ald_DH_N"/>
</dbReference>
<dbReference type="InterPro" id="IPR015590">
    <property type="entry name" value="Aldehyde_DH_dom"/>
</dbReference>
<dbReference type="InterPro" id="IPR015657">
    <property type="entry name" value="Aminobutyraldehyde_DH"/>
</dbReference>
<dbReference type="InterPro" id="IPR017749">
    <property type="entry name" value="PatD"/>
</dbReference>
<dbReference type="NCBIfam" id="TIGR03374">
    <property type="entry name" value="ABALDH"/>
    <property type="match status" value="1"/>
</dbReference>
<dbReference type="NCBIfam" id="NF010000">
    <property type="entry name" value="PRK13473.1"/>
    <property type="match status" value="1"/>
</dbReference>
<dbReference type="PANTHER" id="PTHR11699">
    <property type="entry name" value="ALDEHYDE DEHYDROGENASE-RELATED"/>
    <property type="match status" value="1"/>
</dbReference>
<dbReference type="Pfam" id="PF00171">
    <property type="entry name" value="Aldedh"/>
    <property type="match status" value="1"/>
</dbReference>
<dbReference type="SUPFAM" id="SSF53720">
    <property type="entry name" value="ALDH-like"/>
    <property type="match status" value="1"/>
</dbReference>
<dbReference type="PROSITE" id="PS00687">
    <property type="entry name" value="ALDEHYDE_DEHYDR_GLU"/>
    <property type="match status" value="1"/>
</dbReference>
<name>ABDH_SHIFL</name>
<protein>
    <recommendedName>
        <fullName evidence="1">Gamma-aminobutyraldehyde dehydrogenase</fullName>
        <shortName evidence="1">ABALDH</shortName>
        <ecNumber evidence="1">1.2.1.19</ecNumber>
    </recommendedName>
    <alternativeName>
        <fullName evidence="1">1-pyrroline dehydrogenase</fullName>
    </alternativeName>
    <alternativeName>
        <fullName evidence="1">4-aminobutanal dehydrogenase</fullName>
    </alternativeName>
    <alternativeName>
        <fullName evidence="1">5-aminopentanal dehydrogenase</fullName>
        <ecNumber evidence="1">1.2.1.-</ecNumber>
    </alternativeName>
</protein>
<accession>Q83R90</accession>
<accession>Q7C1B7</accession>
<comment type="function">
    <text evidence="1">Catalyzes the oxidation 4-aminobutanal (gamma-aminobutyraldehyde) to 4-aminobutanoate (gamma-aminobutyrate or GABA). This is the second step in one of two pathways for putrescine degradation, where putrescine is converted into 4-aminobutanoate via 4-aminobutanal. Also functions as a 5-aminopentanal dehydrogenase in a a L-lysine degradation pathway to succinate that proceeds via cadaverine, glutarate and L-2-hydroxyglutarate.</text>
</comment>
<comment type="catalytic activity">
    <reaction evidence="1">
        <text>4-aminobutanal + NAD(+) + H2O = 4-aminobutanoate + NADH + 2 H(+)</text>
        <dbReference type="Rhea" id="RHEA:19105"/>
        <dbReference type="ChEBI" id="CHEBI:15377"/>
        <dbReference type="ChEBI" id="CHEBI:15378"/>
        <dbReference type="ChEBI" id="CHEBI:57540"/>
        <dbReference type="ChEBI" id="CHEBI:57945"/>
        <dbReference type="ChEBI" id="CHEBI:58264"/>
        <dbReference type="ChEBI" id="CHEBI:59888"/>
        <dbReference type="EC" id="1.2.1.19"/>
    </reaction>
    <physiologicalReaction direction="left-to-right" evidence="1">
        <dbReference type="Rhea" id="RHEA:19106"/>
    </physiologicalReaction>
</comment>
<comment type="catalytic activity">
    <reaction evidence="1">
        <text>5-aminopentanal + NAD(+) + H2O = 5-aminopentanoate + NADH + 2 H(+)</text>
        <dbReference type="Rhea" id="RHEA:61632"/>
        <dbReference type="ChEBI" id="CHEBI:15377"/>
        <dbReference type="ChEBI" id="CHEBI:15378"/>
        <dbReference type="ChEBI" id="CHEBI:57540"/>
        <dbReference type="ChEBI" id="CHEBI:57945"/>
        <dbReference type="ChEBI" id="CHEBI:144896"/>
        <dbReference type="ChEBI" id="CHEBI:356010"/>
    </reaction>
    <physiologicalReaction direction="left-to-right" evidence="1">
        <dbReference type="Rhea" id="RHEA:61633"/>
    </physiologicalReaction>
</comment>
<comment type="pathway">
    <text evidence="1">Amine and polyamine degradation; putrescine degradation; 4-aminobutanoate from 4-aminobutanal: step 1/1.</text>
</comment>
<comment type="pathway">
    <text evidence="1">Amino-acid degradation.</text>
</comment>
<comment type="subunit">
    <text evidence="1">Homotetramer.</text>
</comment>
<comment type="miscellaneous">
    <text evidence="1">4-aminobutanal can spontaneously cyclize to 1-pyrroline, and 5-aminopentanal to 1-piperideine.</text>
</comment>
<comment type="similarity">
    <text evidence="1">Belongs to the aldehyde dehydrogenase family. Gamma-aminobutyraldehyde dehydrogenase subfamily.</text>
</comment>
<reference key="1">
    <citation type="journal article" date="2002" name="Nucleic Acids Res.">
        <title>Genome sequence of Shigella flexneri 2a: insights into pathogenicity through comparison with genomes of Escherichia coli K12 and O157.</title>
        <authorList>
            <person name="Jin Q."/>
            <person name="Yuan Z."/>
            <person name="Xu J."/>
            <person name="Wang Y."/>
            <person name="Shen Y."/>
            <person name="Lu W."/>
            <person name="Wang J."/>
            <person name="Liu H."/>
            <person name="Yang J."/>
            <person name="Yang F."/>
            <person name="Zhang X."/>
            <person name="Zhang J."/>
            <person name="Yang G."/>
            <person name="Wu H."/>
            <person name="Qu D."/>
            <person name="Dong J."/>
            <person name="Sun L."/>
            <person name="Xue Y."/>
            <person name="Zhao A."/>
            <person name="Gao Y."/>
            <person name="Zhu J."/>
            <person name="Kan B."/>
            <person name="Ding K."/>
            <person name="Chen S."/>
            <person name="Cheng H."/>
            <person name="Yao Z."/>
            <person name="He B."/>
            <person name="Chen R."/>
            <person name="Ma D."/>
            <person name="Qiang B."/>
            <person name="Wen Y."/>
            <person name="Hou Y."/>
            <person name="Yu J."/>
        </authorList>
    </citation>
    <scope>NUCLEOTIDE SEQUENCE [LARGE SCALE GENOMIC DNA]</scope>
    <source>
        <strain>301 / Serotype 2a</strain>
    </source>
</reference>
<reference key="2">
    <citation type="journal article" date="2003" name="Infect. Immun.">
        <title>Complete genome sequence and comparative genomics of Shigella flexneri serotype 2a strain 2457T.</title>
        <authorList>
            <person name="Wei J."/>
            <person name="Goldberg M.B."/>
            <person name="Burland V."/>
            <person name="Venkatesan M.M."/>
            <person name="Deng W."/>
            <person name="Fournier G."/>
            <person name="Mayhew G.F."/>
            <person name="Plunkett G. III"/>
            <person name="Rose D.J."/>
            <person name="Darling A."/>
            <person name="Mau B."/>
            <person name="Perna N.T."/>
            <person name="Payne S.M."/>
            <person name="Runyen-Janecky L.J."/>
            <person name="Zhou S."/>
            <person name="Schwartz D.C."/>
            <person name="Blattner F.R."/>
        </authorList>
    </citation>
    <scope>NUCLEOTIDE SEQUENCE [LARGE SCALE GENOMIC DNA]</scope>
    <source>
        <strain>ATCC 700930 / 2457T / Serotype 2a</strain>
    </source>
</reference>
<feature type="chain" id="PRO_0000269702" description="Gamma-aminobutyraldehyde dehydrogenase">
    <location>
        <begin position="1"/>
        <end position="474"/>
    </location>
</feature>
<feature type="active site" evidence="1">
    <location>
        <position position="246"/>
    </location>
</feature>
<feature type="active site" description="Nucleophile" evidence="1">
    <location>
        <position position="280"/>
    </location>
</feature>
<feature type="binding site" evidence="1">
    <location>
        <begin position="146"/>
        <end position="148"/>
    </location>
    <ligand>
        <name>NAD(+)</name>
        <dbReference type="ChEBI" id="CHEBI:57540"/>
    </ligand>
</feature>
<feature type="binding site" evidence="1">
    <location>
        <begin position="172"/>
        <end position="175"/>
    </location>
    <ligand>
        <name>NAD(+)</name>
        <dbReference type="ChEBI" id="CHEBI:57540"/>
    </ligand>
</feature>
<feature type="binding site" evidence="1">
    <location>
        <position position="209"/>
    </location>
    <ligand>
        <name>NAD(+)</name>
        <dbReference type="ChEBI" id="CHEBI:57540"/>
    </ligand>
</feature>
<feature type="binding site" evidence="1">
    <location>
        <begin position="225"/>
        <end position="228"/>
    </location>
    <ligand>
        <name>NAD(+)</name>
        <dbReference type="ChEBI" id="CHEBI:57540"/>
    </ligand>
</feature>
<feature type="binding site" evidence="1">
    <location>
        <position position="280"/>
    </location>
    <ligand>
        <name>NAD(+)</name>
        <dbReference type="ChEBI" id="CHEBI:57540"/>
    </ligand>
</feature>
<proteinExistence type="inferred from homology"/>
<evidence type="ECO:0000255" key="1">
    <source>
        <dbReference type="HAMAP-Rule" id="MF_01275"/>
    </source>
</evidence>
<keyword id="KW-0520">NAD</keyword>
<keyword id="KW-0560">Oxidoreductase</keyword>
<keyword id="KW-1185">Reference proteome</keyword>